<evidence type="ECO:0000250" key="1">
    <source>
        <dbReference type="UniProtKB" id="Q9DBR4"/>
    </source>
</evidence>
<evidence type="ECO:0000255" key="2">
    <source>
        <dbReference type="PROSITE-ProRule" id="PRU00148"/>
    </source>
</evidence>
<evidence type="ECO:0000255" key="3">
    <source>
        <dbReference type="PROSITE-ProRule" id="PRU00224"/>
    </source>
</evidence>
<evidence type="ECO:0000256" key="4">
    <source>
        <dbReference type="SAM" id="MobiDB-lite"/>
    </source>
</evidence>
<evidence type="ECO:0000269" key="5">
    <source>
    </source>
</evidence>
<evidence type="ECO:0000269" key="6">
    <source>
    </source>
</evidence>
<evidence type="ECO:0000269" key="7">
    <source>
    </source>
</evidence>
<evidence type="ECO:0000269" key="8">
    <source ref="2"/>
</evidence>
<evidence type="ECO:0000303" key="9">
    <source>
    </source>
</evidence>
<evidence type="ECO:0000303" key="10">
    <source>
    </source>
</evidence>
<evidence type="ECO:0000303" key="11">
    <source>
    </source>
</evidence>
<evidence type="ECO:0000303" key="12">
    <source ref="2"/>
</evidence>
<evidence type="ECO:0000305" key="13"/>
<evidence type="ECO:0000312" key="14">
    <source>
        <dbReference type="HGNC" id="HGNC:582"/>
    </source>
</evidence>
<evidence type="ECO:0007744" key="15">
    <source>
    </source>
</evidence>
<evidence type="ECO:0007744" key="16">
    <source>
    </source>
</evidence>
<evidence type="ECO:0007744" key="17">
    <source>
    </source>
</evidence>
<gene>
    <name evidence="14" type="primary">APBB2</name>
    <name evidence="14" type="synonym">FE65L</name>
    <name evidence="9" type="synonym">FE65L1</name>
</gene>
<keyword id="KW-0025">Alternative splicing</keyword>
<keyword id="KW-0256">Endoplasmic reticulum</keyword>
<keyword id="KW-0967">Endosome</keyword>
<keyword id="KW-0333">Golgi apparatus</keyword>
<keyword id="KW-0597">Phosphoprotein</keyword>
<keyword id="KW-1267">Proteomics identification</keyword>
<keyword id="KW-1185">Reference proteome</keyword>
<keyword id="KW-0677">Repeat</keyword>
<dbReference type="EMBL" id="AK299800">
    <property type="protein sequence ID" value="BAG61676.1"/>
    <property type="molecule type" value="mRNA"/>
</dbReference>
<dbReference type="EMBL" id="AK226179">
    <property type="status" value="NOT_ANNOTATED_CDS"/>
    <property type="molecule type" value="mRNA"/>
</dbReference>
<dbReference type="EMBL" id="AC093804">
    <property type="status" value="NOT_ANNOTATED_CDS"/>
    <property type="molecule type" value="Genomic_DNA"/>
</dbReference>
<dbReference type="EMBL" id="AC096712">
    <property type="status" value="NOT_ANNOTATED_CDS"/>
    <property type="molecule type" value="Genomic_DNA"/>
</dbReference>
<dbReference type="EMBL" id="AC108937">
    <property type="status" value="NOT_ANNOTATED_CDS"/>
    <property type="molecule type" value="Genomic_DNA"/>
</dbReference>
<dbReference type="EMBL" id="AC131953">
    <property type="status" value="NOT_ANNOTATED_CDS"/>
    <property type="molecule type" value="Genomic_DNA"/>
</dbReference>
<dbReference type="EMBL" id="BC027946">
    <property type="protein sequence ID" value="AAH27946.2"/>
    <property type="molecule type" value="mRNA"/>
</dbReference>
<dbReference type="EMBL" id="U62325">
    <property type="protein sequence ID" value="AAC50805.1"/>
    <property type="status" value="ALT_SEQ"/>
    <property type="molecule type" value="mRNA"/>
</dbReference>
<dbReference type="CCDS" id="CCDS43224.1">
    <molecule id="Q92870-2"/>
</dbReference>
<dbReference type="CCDS" id="CCDS54760.1">
    <molecule id="Q92870-3"/>
</dbReference>
<dbReference type="CCDS" id="CCDS54761.1">
    <molecule id="Q92870-1"/>
</dbReference>
<dbReference type="CCDS" id="CCDS54762.1">
    <molecule id="Q92870-4"/>
</dbReference>
<dbReference type="RefSeq" id="NP_001159522.1">
    <molecule id="Q92870-1"/>
    <property type="nucleotide sequence ID" value="NM_001166050.2"/>
</dbReference>
<dbReference type="RefSeq" id="NP_001159523.1">
    <molecule id="Q92870-3"/>
    <property type="nucleotide sequence ID" value="NM_001166051.2"/>
</dbReference>
<dbReference type="RefSeq" id="NP_001159524.1">
    <molecule id="Q92870-3"/>
    <property type="nucleotide sequence ID" value="NM_001166052.2"/>
</dbReference>
<dbReference type="RefSeq" id="NP_001159525.1">
    <molecule id="Q92870-3"/>
    <property type="nucleotide sequence ID" value="NM_001166053.1"/>
</dbReference>
<dbReference type="RefSeq" id="NP_001159526.1">
    <molecule id="Q92870-3"/>
    <property type="nucleotide sequence ID" value="NM_001166054.1"/>
</dbReference>
<dbReference type="RefSeq" id="NP_001317585.1">
    <property type="nucleotide sequence ID" value="NM_001330656.1"/>
</dbReference>
<dbReference type="RefSeq" id="NP_001317587.1">
    <property type="nucleotide sequence ID" value="NM_001330658.1"/>
</dbReference>
<dbReference type="RefSeq" id="NP_004298.1">
    <molecule id="Q92870-4"/>
    <property type="nucleotide sequence ID" value="NM_004307.2"/>
</dbReference>
<dbReference type="RefSeq" id="NP_775098.2">
    <molecule id="Q92870-2"/>
    <property type="nucleotide sequence ID" value="NM_173075.5"/>
</dbReference>
<dbReference type="RefSeq" id="XP_016863634.1">
    <molecule id="Q92870-4"/>
    <property type="nucleotide sequence ID" value="XM_017008145.3"/>
</dbReference>
<dbReference type="RefSeq" id="XP_047306127.1">
    <molecule id="Q92870-4"/>
    <property type="nucleotide sequence ID" value="XM_047450171.1"/>
</dbReference>
<dbReference type="RefSeq" id="XP_047306128.1">
    <molecule id="Q92870-4"/>
    <property type="nucleotide sequence ID" value="XM_047450172.1"/>
</dbReference>
<dbReference type="RefSeq" id="XP_047306129.1">
    <molecule id="Q92870-4"/>
    <property type="nucleotide sequence ID" value="XM_047450173.1"/>
</dbReference>
<dbReference type="RefSeq" id="XP_047306130.1">
    <molecule id="Q92870-4"/>
    <property type="nucleotide sequence ID" value="XM_047450174.1"/>
</dbReference>
<dbReference type="RefSeq" id="XP_047306131.1">
    <molecule id="Q92870-4"/>
    <property type="nucleotide sequence ID" value="XM_047450175.1"/>
</dbReference>
<dbReference type="RefSeq" id="XP_047306132.1">
    <molecule id="Q92870-4"/>
    <property type="nucleotide sequence ID" value="XM_047450176.1"/>
</dbReference>
<dbReference type="RefSeq" id="XP_047306133.1">
    <molecule id="Q92870-1"/>
    <property type="nucleotide sequence ID" value="XM_047450177.1"/>
</dbReference>
<dbReference type="RefSeq" id="XP_047306134.1">
    <molecule id="Q92870-1"/>
    <property type="nucleotide sequence ID" value="XM_047450178.1"/>
</dbReference>
<dbReference type="RefSeq" id="XP_047306135.1">
    <molecule id="Q92870-1"/>
    <property type="nucleotide sequence ID" value="XM_047450179.1"/>
</dbReference>
<dbReference type="RefSeq" id="XP_047306136.1">
    <molecule id="Q92870-1"/>
    <property type="nucleotide sequence ID" value="XM_047450180.1"/>
</dbReference>
<dbReference type="RefSeq" id="XP_047306137.1">
    <molecule id="Q92870-1"/>
    <property type="nucleotide sequence ID" value="XM_047450181.1"/>
</dbReference>
<dbReference type="SMR" id="Q92870"/>
<dbReference type="BioGRID" id="106820">
    <property type="interactions" value="87"/>
</dbReference>
<dbReference type="CORUM" id="Q92870"/>
<dbReference type="FunCoup" id="Q92870">
    <property type="interactions" value="945"/>
</dbReference>
<dbReference type="IntAct" id="Q92870">
    <property type="interactions" value="137"/>
</dbReference>
<dbReference type="MINT" id="Q92870"/>
<dbReference type="STRING" id="9606.ENSP00000427211"/>
<dbReference type="GlyGen" id="Q92870">
    <property type="glycosylation" value="2 sites"/>
</dbReference>
<dbReference type="iPTMnet" id="Q92870"/>
<dbReference type="PhosphoSitePlus" id="Q92870"/>
<dbReference type="BioMuta" id="APBB2"/>
<dbReference type="DMDM" id="317373476"/>
<dbReference type="jPOST" id="Q92870"/>
<dbReference type="MassIVE" id="Q92870"/>
<dbReference type="PaxDb" id="9606-ENSP00000427211"/>
<dbReference type="PeptideAtlas" id="Q92870"/>
<dbReference type="ProteomicsDB" id="20267"/>
<dbReference type="ProteomicsDB" id="5034"/>
<dbReference type="ProteomicsDB" id="75555">
    <molecule id="Q92870-1"/>
</dbReference>
<dbReference type="ProteomicsDB" id="75556">
    <molecule id="Q92870-2"/>
</dbReference>
<dbReference type="Pumba" id="Q92870"/>
<dbReference type="Antibodypedia" id="5811">
    <property type="antibodies" value="172 antibodies from 30 providers"/>
</dbReference>
<dbReference type="DNASU" id="323"/>
<dbReference type="Ensembl" id="ENST00000295974.12">
    <molecule id="Q92870-1"/>
    <property type="protein sequence ID" value="ENSP00000295974.8"/>
    <property type="gene ID" value="ENSG00000163697.18"/>
</dbReference>
<dbReference type="Ensembl" id="ENST00000502841.5">
    <molecule id="Q92870-3"/>
    <property type="protein sequence ID" value="ENSP00000425802.1"/>
    <property type="gene ID" value="ENSG00000163697.18"/>
</dbReference>
<dbReference type="Ensembl" id="ENST00000504305.5">
    <molecule id="Q92870-3"/>
    <property type="protein sequence ID" value="ENSP00000423765.1"/>
    <property type="gene ID" value="ENSG00000163697.18"/>
</dbReference>
<dbReference type="Ensembl" id="ENST00000508593.6">
    <molecule id="Q92870-4"/>
    <property type="protein sequence ID" value="ENSP00000427211.1"/>
    <property type="gene ID" value="ENSG00000163697.18"/>
</dbReference>
<dbReference type="Ensembl" id="ENST00000513140.5">
    <molecule id="Q92870-2"/>
    <property type="protein sequence ID" value="ENSP00000426018.1"/>
    <property type="gene ID" value="ENSG00000163697.18"/>
</dbReference>
<dbReference type="GeneID" id="323"/>
<dbReference type="KEGG" id="hsa:323"/>
<dbReference type="MANE-Select" id="ENST00000508593.6">
    <molecule id="Q92870-4"/>
    <property type="protein sequence ID" value="ENSP00000427211.1"/>
    <property type="RefSeq nucleotide sequence ID" value="NM_004307.2"/>
    <property type="RefSeq protein sequence ID" value="NP_004298.1"/>
</dbReference>
<dbReference type="UCSC" id="uc003gvk.4">
    <molecule id="Q92870-1"/>
    <property type="organism name" value="human"/>
</dbReference>
<dbReference type="AGR" id="HGNC:582"/>
<dbReference type="CTD" id="323"/>
<dbReference type="DisGeNET" id="323"/>
<dbReference type="GeneCards" id="APBB2"/>
<dbReference type="HGNC" id="HGNC:582">
    <property type="gene designation" value="APBB2"/>
</dbReference>
<dbReference type="HPA" id="ENSG00000163697">
    <property type="expression patterns" value="Low tissue specificity"/>
</dbReference>
<dbReference type="MIM" id="602710">
    <property type="type" value="gene"/>
</dbReference>
<dbReference type="neXtProt" id="NX_Q92870"/>
<dbReference type="OpenTargets" id="ENSG00000163697"/>
<dbReference type="PharmGKB" id="PA24874"/>
<dbReference type="VEuPathDB" id="HostDB:ENSG00000163697"/>
<dbReference type="eggNOG" id="ENOG502QT08">
    <property type="taxonomic scope" value="Eukaryota"/>
</dbReference>
<dbReference type="GeneTree" id="ENSGT00390000000002"/>
<dbReference type="HOGENOM" id="CLU_092267_0_0_1"/>
<dbReference type="InParanoid" id="Q92870"/>
<dbReference type="OMA" id="NVPHADD"/>
<dbReference type="OrthoDB" id="5969782at2759"/>
<dbReference type="PAN-GO" id="Q92870">
    <property type="GO annotations" value="5 GO annotations based on evolutionary models"/>
</dbReference>
<dbReference type="PhylomeDB" id="Q92870"/>
<dbReference type="TreeFam" id="TF314331"/>
<dbReference type="PathwayCommons" id="Q92870"/>
<dbReference type="SignaLink" id="Q92870"/>
<dbReference type="BioGRID-ORCS" id="323">
    <property type="hits" value="6 hits in 1146 CRISPR screens"/>
</dbReference>
<dbReference type="ChiTaRS" id="APBB2">
    <property type="organism name" value="human"/>
</dbReference>
<dbReference type="GeneWiki" id="APBB2"/>
<dbReference type="GenomeRNAi" id="323"/>
<dbReference type="Pharos" id="Q92870">
    <property type="development level" value="Tbio"/>
</dbReference>
<dbReference type="PRO" id="PR:Q92870"/>
<dbReference type="Proteomes" id="UP000005640">
    <property type="component" value="Chromosome 4"/>
</dbReference>
<dbReference type="RNAct" id="Q92870">
    <property type="molecule type" value="protein"/>
</dbReference>
<dbReference type="Bgee" id="ENSG00000163697">
    <property type="expression patterns" value="Expressed in buccal mucosa cell and 200 other cell types or tissues"/>
</dbReference>
<dbReference type="ExpressionAtlas" id="Q92870">
    <property type="expression patterns" value="baseline and differential"/>
</dbReference>
<dbReference type="GO" id="GO:0005737">
    <property type="term" value="C:cytoplasm"/>
    <property type="evidence" value="ECO:0000318"/>
    <property type="project" value="GO_Central"/>
</dbReference>
<dbReference type="GO" id="GO:0005769">
    <property type="term" value="C:early endosome"/>
    <property type="evidence" value="ECO:0000314"/>
    <property type="project" value="UniProtKB"/>
</dbReference>
<dbReference type="GO" id="GO:0005783">
    <property type="term" value="C:endoplasmic reticulum"/>
    <property type="evidence" value="ECO:0000314"/>
    <property type="project" value="UniProtKB"/>
</dbReference>
<dbReference type="GO" id="GO:0005794">
    <property type="term" value="C:Golgi apparatus"/>
    <property type="evidence" value="ECO:0000314"/>
    <property type="project" value="UniProtKB"/>
</dbReference>
<dbReference type="GO" id="GO:0030426">
    <property type="term" value="C:growth cone"/>
    <property type="evidence" value="ECO:0000250"/>
    <property type="project" value="UniProtKB"/>
</dbReference>
<dbReference type="GO" id="GO:0030027">
    <property type="term" value="C:lamellipodium"/>
    <property type="evidence" value="ECO:0000250"/>
    <property type="project" value="UniProtKB"/>
</dbReference>
<dbReference type="GO" id="GO:0016020">
    <property type="term" value="C:membrane"/>
    <property type="evidence" value="ECO:0000303"/>
    <property type="project" value="UniProtKB"/>
</dbReference>
<dbReference type="GO" id="GO:0005634">
    <property type="term" value="C:nucleus"/>
    <property type="evidence" value="ECO:0000314"/>
    <property type="project" value="UniProtKB"/>
</dbReference>
<dbReference type="GO" id="GO:0045202">
    <property type="term" value="C:synapse"/>
    <property type="evidence" value="ECO:0000250"/>
    <property type="project" value="UniProtKB"/>
</dbReference>
<dbReference type="GO" id="GO:0001540">
    <property type="term" value="F:amyloid-beta binding"/>
    <property type="evidence" value="ECO:0000318"/>
    <property type="project" value="GO_Central"/>
</dbReference>
<dbReference type="GO" id="GO:0060090">
    <property type="term" value="F:molecular adaptor activity"/>
    <property type="evidence" value="ECO:0000318"/>
    <property type="project" value="GO_Central"/>
</dbReference>
<dbReference type="GO" id="GO:0007411">
    <property type="term" value="P:axon guidance"/>
    <property type="evidence" value="ECO:0007669"/>
    <property type="project" value="Ensembl"/>
</dbReference>
<dbReference type="GO" id="GO:0030198">
    <property type="term" value="P:extracellular matrix organization"/>
    <property type="evidence" value="ECO:0007669"/>
    <property type="project" value="Ensembl"/>
</dbReference>
<dbReference type="GO" id="GO:0035556">
    <property type="term" value="P:intracellular signal transduction"/>
    <property type="evidence" value="ECO:0000303"/>
    <property type="project" value="UniProtKB"/>
</dbReference>
<dbReference type="GO" id="GO:0036438">
    <property type="term" value="P:maintenance of lens transparency"/>
    <property type="evidence" value="ECO:0000250"/>
    <property type="project" value="UniProtKB"/>
</dbReference>
<dbReference type="GO" id="GO:0043066">
    <property type="term" value="P:negative regulation of apoptotic process"/>
    <property type="evidence" value="ECO:0007669"/>
    <property type="project" value="Ensembl"/>
</dbReference>
<dbReference type="GO" id="GO:1901988">
    <property type="term" value="P:negative regulation of cell cycle phase transition"/>
    <property type="evidence" value="ECO:0000314"/>
    <property type="project" value="UniProtKB"/>
</dbReference>
<dbReference type="GO" id="GO:0000122">
    <property type="term" value="P:negative regulation of transcription by RNA polymerase II"/>
    <property type="evidence" value="ECO:0000314"/>
    <property type="project" value="UniProtKB"/>
</dbReference>
<dbReference type="GO" id="GO:0001764">
    <property type="term" value="P:neuron migration"/>
    <property type="evidence" value="ECO:0007669"/>
    <property type="project" value="Ensembl"/>
</dbReference>
<dbReference type="GO" id="GO:0043065">
    <property type="term" value="P:positive regulation of apoptotic process"/>
    <property type="evidence" value="ECO:0007669"/>
    <property type="project" value="Ensembl"/>
</dbReference>
<dbReference type="GO" id="GO:0045944">
    <property type="term" value="P:positive regulation of transcription by RNA polymerase II"/>
    <property type="evidence" value="ECO:0000314"/>
    <property type="project" value="UniProtKB"/>
</dbReference>
<dbReference type="GO" id="GO:0006355">
    <property type="term" value="P:regulation of DNA-templated transcription"/>
    <property type="evidence" value="ECO:0000318"/>
    <property type="project" value="GO_Central"/>
</dbReference>
<dbReference type="GO" id="GO:0006939">
    <property type="term" value="P:smooth muscle contraction"/>
    <property type="evidence" value="ECO:0000250"/>
    <property type="project" value="UniProtKB"/>
</dbReference>
<dbReference type="GO" id="GO:0050808">
    <property type="term" value="P:synapse organization"/>
    <property type="evidence" value="ECO:0000250"/>
    <property type="project" value="ARUK-UCL"/>
</dbReference>
<dbReference type="CDD" id="cd01272">
    <property type="entry name" value="PTB1_Fe65"/>
    <property type="match status" value="1"/>
</dbReference>
<dbReference type="CDD" id="cd01271">
    <property type="entry name" value="PTB2_Fe65"/>
    <property type="match status" value="1"/>
</dbReference>
<dbReference type="CDD" id="cd00201">
    <property type="entry name" value="WW"/>
    <property type="match status" value="1"/>
</dbReference>
<dbReference type="FunFam" id="2.30.29.30:FF:000019">
    <property type="entry name" value="Amyloid beta (A4) precursor protein-binding, family B, member 1 (Fe65)"/>
    <property type="match status" value="1"/>
</dbReference>
<dbReference type="FunFam" id="2.20.70.10:FF:000003">
    <property type="entry name" value="amyloid beta A4 precursor protein-binding family B member 2"/>
    <property type="match status" value="1"/>
</dbReference>
<dbReference type="FunFam" id="2.30.29.30:FF:000034">
    <property type="entry name" value="amyloid beta A4 precursor protein-binding family B member 2"/>
    <property type="match status" value="1"/>
</dbReference>
<dbReference type="Gene3D" id="2.20.70.10">
    <property type="match status" value="1"/>
</dbReference>
<dbReference type="Gene3D" id="2.30.29.30">
    <property type="entry name" value="Pleckstrin-homology domain (PH domain)/Phosphotyrosine-binding domain (PTB)"/>
    <property type="match status" value="2"/>
</dbReference>
<dbReference type="InterPro" id="IPR039576">
    <property type="entry name" value="APBB1/2/3"/>
</dbReference>
<dbReference type="InterPro" id="IPR011993">
    <property type="entry name" value="PH-like_dom_sf"/>
</dbReference>
<dbReference type="InterPro" id="IPR006020">
    <property type="entry name" value="PTB/PI_dom"/>
</dbReference>
<dbReference type="InterPro" id="IPR001202">
    <property type="entry name" value="WW_dom"/>
</dbReference>
<dbReference type="InterPro" id="IPR036020">
    <property type="entry name" value="WW_dom_sf"/>
</dbReference>
<dbReference type="PANTHER" id="PTHR14058">
    <property type="entry name" value="AMYLOID BETA A4 PRECURSOR PROTEIN-BINDING FAMILY B"/>
    <property type="match status" value="1"/>
</dbReference>
<dbReference type="PANTHER" id="PTHR14058:SF11">
    <property type="entry name" value="AMYLOID BETA PRECURSOR PROTEIN BINDING FAMILY B MEMBER 2"/>
    <property type="match status" value="1"/>
</dbReference>
<dbReference type="Pfam" id="PF00640">
    <property type="entry name" value="PID"/>
    <property type="match status" value="2"/>
</dbReference>
<dbReference type="Pfam" id="PF00397">
    <property type="entry name" value="WW"/>
    <property type="match status" value="1"/>
</dbReference>
<dbReference type="SMART" id="SM00462">
    <property type="entry name" value="PTB"/>
    <property type="match status" value="2"/>
</dbReference>
<dbReference type="SMART" id="SM00456">
    <property type="entry name" value="WW"/>
    <property type="match status" value="1"/>
</dbReference>
<dbReference type="SUPFAM" id="SSF50729">
    <property type="entry name" value="PH domain-like"/>
    <property type="match status" value="2"/>
</dbReference>
<dbReference type="SUPFAM" id="SSF51045">
    <property type="entry name" value="WW domain"/>
    <property type="match status" value="1"/>
</dbReference>
<dbReference type="PROSITE" id="PS01179">
    <property type="entry name" value="PID"/>
    <property type="match status" value="2"/>
</dbReference>
<dbReference type="PROSITE" id="PS01159">
    <property type="entry name" value="WW_DOMAIN_1"/>
    <property type="match status" value="1"/>
</dbReference>
<dbReference type="PROSITE" id="PS50020">
    <property type="entry name" value="WW_DOMAIN_2"/>
    <property type="match status" value="1"/>
</dbReference>
<reference key="1">
    <citation type="journal article" date="2004" name="Nat. Genet.">
        <title>Complete sequencing and characterization of 21,243 full-length human cDNAs.</title>
        <authorList>
            <person name="Ota T."/>
            <person name="Suzuki Y."/>
            <person name="Nishikawa T."/>
            <person name="Otsuki T."/>
            <person name="Sugiyama T."/>
            <person name="Irie R."/>
            <person name="Wakamatsu A."/>
            <person name="Hayashi K."/>
            <person name="Sato H."/>
            <person name="Nagai K."/>
            <person name="Kimura K."/>
            <person name="Makita H."/>
            <person name="Sekine M."/>
            <person name="Obayashi M."/>
            <person name="Nishi T."/>
            <person name="Shibahara T."/>
            <person name="Tanaka T."/>
            <person name="Ishii S."/>
            <person name="Yamamoto J."/>
            <person name="Saito K."/>
            <person name="Kawai Y."/>
            <person name="Isono Y."/>
            <person name="Nakamura Y."/>
            <person name="Nagahari K."/>
            <person name="Murakami K."/>
            <person name="Yasuda T."/>
            <person name="Iwayanagi T."/>
            <person name="Wagatsuma M."/>
            <person name="Shiratori A."/>
            <person name="Sudo H."/>
            <person name="Hosoiri T."/>
            <person name="Kaku Y."/>
            <person name="Kodaira H."/>
            <person name="Kondo H."/>
            <person name="Sugawara M."/>
            <person name="Takahashi M."/>
            <person name="Kanda K."/>
            <person name="Yokoi T."/>
            <person name="Furuya T."/>
            <person name="Kikkawa E."/>
            <person name="Omura Y."/>
            <person name="Abe K."/>
            <person name="Kamihara K."/>
            <person name="Katsuta N."/>
            <person name="Sato K."/>
            <person name="Tanikawa M."/>
            <person name="Yamazaki M."/>
            <person name="Ninomiya K."/>
            <person name="Ishibashi T."/>
            <person name="Yamashita H."/>
            <person name="Murakawa K."/>
            <person name="Fujimori K."/>
            <person name="Tanai H."/>
            <person name="Kimata M."/>
            <person name="Watanabe M."/>
            <person name="Hiraoka S."/>
            <person name="Chiba Y."/>
            <person name="Ishida S."/>
            <person name="Ono Y."/>
            <person name="Takiguchi S."/>
            <person name="Watanabe S."/>
            <person name="Yosida M."/>
            <person name="Hotuta T."/>
            <person name="Kusano J."/>
            <person name="Kanehori K."/>
            <person name="Takahashi-Fujii A."/>
            <person name="Hara H."/>
            <person name="Tanase T.-O."/>
            <person name="Nomura Y."/>
            <person name="Togiya S."/>
            <person name="Komai F."/>
            <person name="Hara R."/>
            <person name="Takeuchi K."/>
            <person name="Arita M."/>
            <person name="Imose N."/>
            <person name="Musashino K."/>
            <person name="Yuuki H."/>
            <person name="Oshima A."/>
            <person name="Sasaki N."/>
            <person name="Aotsuka S."/>
            <person name="Yoshikawa Y."/>
            <person name="Matsunawa H."/>
            <person name="Ichihara T."/>
            <person name="Shiohata N."/>
            <person name="Sano S."/>
            <person name="Moriya S."/>
            <person name="Momiyama H."/>
            <person name="Satoh N."/>
            <person name="Takami S."/>
            <person name="Terashima Y."/>
            <person name="Suzuki O."/>
            <person name="Nakagawa S."/>
            <person name="Senoh A."/>
            <person name="Mizoguchi H."/>
            <person name="Goto Y."/>
            <person name="Shimizu F."/>
            <person name="Wakebe H."/>
            <person name="Hishigaki H."/>
            <person name="Watanabe T."/>
            <person name="Sugiyama A."/>
            <person name="Takemoto M."/>
            <person name="Kawakami B."/>
            <person name="Yamazaki M."/>
            <person name="Watanabe K."/>
            <person name="Kumagai A."/>
            <person name="Itakura S."/>
            <person name="Fukuzumi Y."/>
            <person name="Fujimori Y."/>
            <person name="Komiyama M."/>
            <person name="Tashiro H."/>
            <person name="Tanigami A."/>
            <person name="Fujiwara T."/>
            <person name="Ono T."/>
            <person name="Yamada K."/>
            <person name="Fujii Y."/>
            <person name="Ozaki K."/>
            <person name="Hirao M."/>
            <person name="Ohmori Y."/>
            <person name="Kawabata A."/>
            <person name="Hikiji T."/>
            <person name="Kobatake N."/>
            <person name="Inagaki H."/>
            <person name="Ikema Y."/>
            <person name="Okamoto S."/>
            <person name="Okitani R."/>
            <person name="Kawakami T."/>
            <person name="Noguchi S."/>
            <person name="Itoh T."/>
            <person name="Shigeta K."/>
            <person name="Senba T."/>
            <person name="Matsumura K."/>
            <person name="Nakajima Y."/>
            <person name="Mizuno T."/>
            <person name="Morinaga M."/>
            <person name="Sasaki M."/>
            <person name="Togashi T."/>
            <person name="Oyama M."/>
            <person name="Hata H."/>
            <person name="Watanabe M."/>
            <person name="Komatsu T."/>
            <person name="Mizushima-Sugano J."/>
            <person name="Satoh T."/>
            <person name="Shirai Y."/>
            <person name="Takahashi Y."/>
            <person name="Nakagawa K."/>
            <person name="Okumura K."/>
            <person name="Nagase T."/>
            <person name="Nomura N."/>
            <person name="Kikuchi H."/>
            <person name="Masuho Y."/>
            <person name="Yamashita R."/>
            <person name="Nakai K."/>
            <person name="Yada T."/>
            <person name="Nakamura Y."/>
            <person name="Ohara O."/>
            <person name="Isogai T."/>
            <person name="Sugano S."/>
        </authorList>
    </citation>
    <scope>NUCLEOTIDE SEQUENCE [LARGE SCALE MRNA] (ISOFORM 3)</scope>
    <source>
        <tissue>Brain</tissue>
    </source>
</reference>
<reference key="2">
    <citation type="submission" date="2006-07" db="EMBL/GenBank/DDBJ databases">
        <title>Homo sapiens protein coding cDNA.</title>
        <authorList>
            <person name="Totoki Y."/>
            <person name="Toyoda A."/>
            <person name="Takeda T."/>
            <person name="Sakaki Y."/>
            <person name="Tanaka A."/>
            <person name="Yokoyama S."/>
            <person name="Ohara O."/>
            <person name="Nagase T."/>
            <person name="Kikuno R.F."/>
        </authorList>
    </citation>
    <scope>NUCLEOTIDE SEQUENCE [LARGE SCALE MRNA] (ISOFORM 4)</scope>
    <scope>VARIANT GLN-179</scope>
    <source>
        <tissue>Aortic endothelium</tissue>
    </source>
</reference>
<reference key="3">
    <citation type="journal article" date="2005" name="Nature">
        <title>Generation and annotation of the DNA sequences of human chromosomes 2 and 4.</title>
        <authorList>
            <person name="Hillier L.W."/>
            <person name="Graves T.A."/>
            <person name="Fulton R.S."/>
            <person name="Fulton L.A."/>
            <person name="Pepin K.H."/>
            <person name="Minx P."/>
            <person name="Wagner-McPherson C."/>
            <person name="Layman D."/>
            <person name="Wylie K."/>
            <person name="Sekhon M."/>
            <person name="Becker M.C."/>
            <person name="Fewell G.A."/>
            <person name="Delehaunty K.D."/>
            <person name="Miner T.L."/>
            <person name="Nash W.E."/>
            <person name="Kremitzki C."/>
            <person name="Oddy L."/>
            <person name="Du H."/>
            <person name="Sun H."/>
            <person name="Bradshaw-Cordum H."/>
            <person name="Ali J."/>
            <person name="Carter J."/>
            <person name="Cordes M."/>
            <person name="Harris A."/>
            <person name="Isak A."/>
            <person name="van Brunt A."/>
            <person name="Nguyen C."/>
            <person name="Du F."/>
            <person name="Courtney L."/>
            <person name="Kalicki J."/>
            <person name="Ozersky P."/>
            <person name="Abbott S."/>
            <person name="Armstrong J."/>
            <person name="Belter E.A."/>
            <person name="Caruso L."/>
            <person name="Cedroni M."/>
            <person name="Cotton M."/>
            <person name="Davidson T."/>
            <person name="Desai A."/>
            <person name="Elliott G."/>
            <person name="Erb T."/>
            <person name="Fronick C."/>
            <person name="Gaige T."/>
            <person name="Haakenson W."/>
            <person name="Haglund K."/>
            <person name="Holmes A."/>
            <person name="Harkins R."/>
            <person name="Kim K."/>
            <person name="Kruchowski S.S."/>
            <person name="Strong C.M."/>
            <person name="Grewal N."/>
            <person name="Goyea E."/>
            <person name="Hou S."/>
            <person name="Levy A."/>
            <person name="Martinka S."/>
            <person name="Mead K."/>
            <person name="McLellan M.D."/>
            <person name="Meyer R."/>
            <person name="Randall-Maher J."/>
            <person name="Tomlinson C."/>
            <person name="Dauphin-Kohlberg S."/>
            <person name="Kozlowicz-Reilly A."/>
            <person name="Shah N."/>
            <person name="Swearengen-Shahid S."/>
            <person name="Snider J."/>
            <person name="Strong J.T."/>
            <person name="Thompson J."/>
            <person name="Yoakum M."/>
            <person name="Leonard S."/>
            <person name="Pearman C."/>
            <person name="Trani L."/>
            <person name="Radionenko M."/>
            <person name="Waligorski J.E."/>
            <person name="Wang C."/>
            <person name="Rock S.M."/>
            <person name="Tin-Wollam A.-M."/>
            <person name="Maupin R."/>
            <person name="Latreille P."/>
            <person name="Wendl M.C."/>
            <person name="Yang S.-P."/>
            <person name="Pohl C."/>
            <person name="Wallis J.W."/>
            <person name="Spieth J."/>
            <person name="Bieri T.A."/>
            <person name="Berkowicz N."/>
            <person name="Nelson J.O."/>
            <person name="Osborne J."/>
            <person name="Ding L."/>
            <person name="Meyer R."/>
            <person name="Sabo A."/>
            <person name="Shotland Y."/>
            <person name="Sinha P."/>
            <person name="Wohldmann P.E."/>
            <person name="Cook L.L."/>
            <person name="Hickenbotham M.T."/>
            <person name="Eldred J."/>
            <person name="Williams D."/>
            <person name="Jones T.A."/>
            <person name="She X."/>
            <person name="Ciccarelli F.D."/>
            <person name="Izaurralde E."/>
            <person name="Taylor J."/>
            <person name="Schmutz J."/>
            <person name="Myers R.M."/>
            <person name="Cox D.R."/>
            <person name="Huang X."/>
            <person name="McPherson J.D."/>
            <person name="Mardis E.R."/>
            <person name="Clifton S.W."/>
            <person name="Warren W.C."/>
            <person name="Chinwalla A.T."/>
            <person name="Eddy S.R."/>
            <person name="Marra M.A."/>
            <person name="Ovcharenko I."/>
            <person name="Furey T.S."/>
            <person name="Miller W."/>
            <person name="Eichler E.E."/>
            <person name="Bork P."/>
            <person name="Suyama M."/>
            <person name="Torrents D."/>
            <person name="Waterston R.H."/>
            <person name="Wilson R.K."/>
        </authorList>
    </citation>
    <scope>NUCLEOTIDE SEQUENCE [LARGE SCALE GENOMIC DNA]</scope>
</reference>
<reference key="4">
    <citation type="journal article" date="2004" name="Genome Res.">
        <title>The status, quality, and expansion of the NIH full-length cDNA project: the Mammalian Gene Collection (MGC).</title>
        <authorList>
            <consortium name="The MGC Project Team"/>
        </authorList>
    </citation>
    <scope>NUCLEOTIDE SEQUENCE [LARGE SCALE MRNA] (ISOFORM 2)</scope>
    <scope>VARIANT GLN-179</scope>
    <source>
        <tissue>Lung</tissue>
    </source>
</reference>
<reference key="5">
    <citation type="journal article" date="1996" name="Proc. Natl. Acad. Sci. U.S.A.">
        <title>Association of a novel human FE65-like protein with the cytoplasmic domain of the amyloid-beta precursor protein.</title>
        <authorList>
            <person name="Guenette S.Y."/>
            <person name="Chen J."/>
            <person name="Jondro P.D."/>
            <person name="Tanzi R.E."/>
        </authorList>
    </citation>
    <scope>NUCLEOTIDE SEQUENCE [MRNA] OF 66-758 (ISOFORM 1)</scope>
    <scope>INTERACTION WITH APLP2 AND APP</scope>
    <scope>TISSUE SPECIFICITY</scope>
    <source>
        <tissue>Fetal brain</tissue>
        <tissue>Kidney</tissue>
    </source>
</reference>
<reference key="6">
    <citation type="journal article" date="2003" name="J. Biol. Chem.">
        <title>Generation of the beta-amyloid peptide and the amyloid precursor protein C-terminal fragment gamma are potentiated by FE65L1.</title>
        <authorList>
            <person name="Chang Y."/>
            <person name="Tesco G."/>
            <person name="Jeong W.J."/>
            <person name="Lindsley L."/>
            <person name="Eckman E.A."/>
            <person name="Eckman C.B."/>
            <person name="Tanzi R.E."/>
            <person name="Guenette S.Y."/>
        </authorList>
    </citation>
    <scope>FUNCTION</scope>
    <scope>INTERACTION WITH APP</scope>
    <scope>SUBCELLULAR LOCATION</scope>
    <scope>MUTAGENESIS OF CYS-702</scope>
</reference>
<reference key="7">
    <citation type="journal article" date="2009" name="Anal. Chem.">
        <title>Lys-N and trypsin cover complementary parts of the phosphoproteome in a refined SCX-based approach.</title>
        <authorList>
            <person name="Gauci S."/>
            <person name="Helbig A.O."/>
            <person name="Slijper M."/>
            <person name="Krijgsveld J."/>
            <person name="Heck A.J."/>
            <person name="Mohammed S."/>
        </authorList>
    </citation>
    <scope>IDENTIFICATION BY MASS SPECTROMETRY [LARGE SCALE ANALYSIS]</scope>
</reference>
<reference key="8">
    <citation type="journal article" date="2009" name="Sci. Signal.">
        <title>Quantitative phosphoproteomic analysis of T cell receptor signaling reveals system-wide modulation of protein-protein interactions.</title>
        <authorList>
            <person name="Mayya V."/>
            <person name="Lundgren D.H."/>
            <person name="Hwang S.-I."/>
            <person name="Rezaul K."/>
            <person name="Wu L."/>
            <person name="Eng J.K."/>
            <person name="Rodionov V."/>
            <person name="Han D.K."/>
        </authorList>
    </citation>
    <scope>IDENTIFICATION BY MASS SPECTROMETRY [LARGE SCALE ANALYSIS]</scope>
    <source>
        <tissue>Leukemic T-cell</tissue>
    </source>
</reference>
<reference key="9">
    <citation type="journal article" date="2010" name="Sci. Signal.">
        <title>Quantitative phosphoproteomics reveals widespread full phosphorylation site occupancy during mitosis.</title>
        <authorList>
            <person name="Olsen J.V."/>
            <person name="Vermeulen M."/>
            <person name="Santamaria A."/>
            <person name="Kumar C."/>
            <person name="Miller M.L."/>
            <person name="Jensen L.J."/>
            <person name="Gnad F."/>
            <person name="Cox J."/>
            <person name="Jensen T.S."/>
            <person name="Nigg E.A."/>
            <person name="Brunak S."/>
            <person name="Mann M."/>
        </authorList>
    </citation>
    <scope>IDENTIFICATION BY MASS SPECTROMETRY [LARGE SCALE ANALYSIS]</scope>
    <source>
        <tissue>Cervix carcinoma</tissue>
    </source>
</reference>
<reference key="10">
    <citation type="journal article" date="2011" name="Sci. Signal.">
        <title>System-wide temporal characterization of the proteome and phosphoproteome of human embryonic stem cell differentiation.</title>
        <authorList>
            <person name="Rigbolt K.T."/>
            <person name="Prokhorova T.A."/>
            <person name="Akimov V."/>
            <person name="Henningsen J."/>
            <person name="Johansen P.T."/>
            <person name="Kratchmarova I."/>
            <person name="Kassem M."/>
            <person name="Mann M."/>
            <person name="Olsen J.V."/>
            <person name="Blagoev B."/>
        </authorList>
    </citation>
    <scope>PHOSPHORYLATION [LARGE SCALE ANALYSIS] AT SER-123</scope>
    <scope>IDENTIFICATION BY MASS SPECTROMETRY [LARGE SCALE ANALYSIS]</scope>
</reference>
<reference key="11">
    <citation type="journal article" date="2013" name="J. Proteome Res.">
        <title>Toward a comprehensive characterization of a human cancer cell phosphoproteome.</title>
        <authorList>
            <person name="Zhou H."/>
            <person name="Di Palma S."/>
            <person name="Preisinger C."/>
            <person name="Peng M."/>
            <person name="Polat A.N."/>
            <person name="Heck A.J."/>
            <person name="Mohammed S."/>
        </authorList>
    </citation>
    <scope>PHOSPHORYLATION [LARGE SCALE ANALYSIS] AT SER-160</scope>
    <scope>IDENTIFICATION BY MASS SPECTROMETRY [LARGE SCALE ANALYSIS]</scope>
    <source>
        <tissue>Cervix carcinoma</tissue>
    </source>
</reference>
<reference key="12">
    <citation type="journal article" date="2014" name="J. Proteomics">
        <title>An enzyme assisted RP-RPLC approach for in-depth analysis of human liver phosphoproteome.</title>
        <authorList>
            <person name="Bian Y."/>
            <person name="Song C."/>
            <person name="Cheng K."/>
            <person name="Dong M."/>
            <person name="Wang F."/>
            <person name="Huang J."/>
            <person name="Sun D."/>
            <person name="Wang L."/>
            <person name="Ye M."/>
            <person name="Zou H."/>
        </authorList>
    </citation>
    <scope>PHOSPHORYLATION [LARGE SCALE ANALYSIS] AT SER-123 AND SER-334</scope>
    <scope>IDENTIFICATION BY MASS SPECTROMETRY [LARGE SCALE ANALYSIS]</scope>
    <source>
        <tissue>Liver</tissue>
    </source>
</reference>
<feature type="chain" id="PRO_0000076052" description="Amyloid beta precursor protein binding family B member 2">
    <location>
        <begin position="1"/>
        <end position="758"/>
    </location>
</feature>
<feature type="domain" description="WW" evidence="3">
    <location>
        <begin position="290"/>
        <end position="322"/>
    </location>
</feature>
<feature type="domain" description="PID 1" evidence="2">
    <location>
        <begin position="413"/>
        <end position="578"/>
    </location>
</feature>
<feature type="domain" description="PID 2" evidence="2">
    <location>
        <begin position="584"/>
        <end position="736"/>
    </location>
</feature>
<feature type="region of interest" description="Disordered" evidence="4">
    <location>
        <begin position="134"/>
        <end position="154"/>
    </location>
</feature>
<feature type="region of interest" description="Disordered" evidence="4">
    <location>
        <begin position="176"/>
        <end position="195"/>
    </location>
</feature>
<feature type="region of interest" description="Disordered" evidence="4">
    <location>
        <begin position="206"/>
        <end position="295"/>
    </location>
</feature>
<feature type="region of interest" description="Disordered" evidence="4">
    <location>
        <begin position="326"/>
        <end position="351"/>
    </location>
</feature>
<feature type="compositionally biased region" description="Basic and acidic residues" evidence="4">
    <location>
        <begin position="176"/>
        <end position="190"/>
    </location>
</feature>
<feature type="compositionally biased region" description="Polar residues" evidence="4">
    <location>
        <begin position="212"/>
        <end position="230"/>
    </location>
</feature>
<feature type="compositionally biased region" description="Polar residues" evidence="4">
    <location>
        <begin position="261"/>
        <end position="275"/>
    </location>
</feature>
<feature type="compositionally biased region" description="Polar residues" evidence="4">
    <location>
        <begin position="331"/>
        <end position="340"/>
    </location>
</feature>
<feature type="modified residue" description="Phosphoserine" evidence="15 17">
    <location>
        <position position="123"/>
    </location>
</feature>
<feature type="modified residue" description="Phosphoserine" evidence="16">
    <location>
        <position position="160"/>
    </location>
</feature>
<feature type="modified residue" description="Phosphoserine" evidence="17">
    <location>
        <position position="334"/>
    </location>
</feature>
<feature type="modified residue" description="Phosphoserine" evidence="1">
    <location>
        <position position="409"/>
    </location>
</feature>
<feature type="modified residue" description="Phosphoserine" evidence="1">
    <location>
        <position position="412"/>
    </location>
</feature>
<feature type="splice variant" id="VSP_044232" description="In isoform 3." evidence="10">
    <location>
        <begin position="1"/>
        <end position="548"/>
    </location>
</feature>
<feature type="splice variant" id="VSP_045042" description="In isoform 4." evidence="12">
    <original>T</original>
    <variation>TA</variation>
    <location>
        <position position="278"/>
    </location>
</feature>
<feature type="splice variant" id="VSP_040354" description="In isoform 2." evidence="11">
    <location>
        <begin position="348"/>
        <end position="368"/>
    </location>
</feature>
<feature type="splice variant" id="VSP_040355" description="In isoform 2." evidence="11">
    <location>
        <position position="577"/>
    </location>
</feature>
<feature type="sequence variant" id="VAR_069029" description="In dbSNP:rs4861358." evidence="6 8">
    <original>R</original>
    <variation>Q</variation>
    <location>
        <position position="179"/>
    </location>
</feature>
<feature type="mutagenesis site" description="Abolishes interaction with APP and gamma-secretase-dependent processing of the APP membrane-anchored C-terminal fragment C83." evidence="5">
    <original>C</original>
    <variation>V</variation>
    <location>
        <position position="702"/>
    </location>
</feature>
<feature type="sequence conflict" description="In Ref. 5; AAC50805." evidence="13" ref="5">
    <original>L</original>
    <variation>W</variation>
    <location>
        <position position="490"/>
    </location>
</feature>
<organism>
    <name type="scientific">Homo sapiens</name>
    <name type="common">Human</name>
    <dbReference type="NCBI Taxonomy" id="9606"/>
    <lineage>
        <taxon>Eukaryota</taxon>
        <taxon>Metazoa</taxon>
        <taxon>Chordata</taxon>
        <taxon>Craniata</taxon>
        <taxon>Vertebrata</taxon>
        <taxon>Euteleostomi</taxon>
        <taxon>Mammalia</taxon>
        <taxon>Eutheria</taxon>
        <taxon>Euarchontoglires</taxon>
        <taxon>Primates</taxon>
        <taxon>Haplorrhini</taxon>
        <taxon>Catarrhini</taxon>
        <taxon>Hominidae</taxon>
        <taxon>Homo</taxon>
    </lineage>
</organism>
<accession>Q92870</accession>
<accession>B4DSL4</accession>
<accession>E9PG87</accession>
<accession>Q8IUI6</accession>
<protein>
    <recommendedName>
        <fullName evidence="14">Amyloid beta precursor protein binding family B member 2</fullName>
    </recommendedName>
    <alternativeName>
        <fullName evidence="1">Amyloid-beta (A4) precursor protein-binding family B member 2</fullName>
    </alternativeName>
    <alternativeName>
        <fullName evidence="14">Protein Fe65-like 1</fullName>
    </alternativeName>
</protein>
<proteinExistence type="evidence at protein level"/>
<name>APBB2_HUMAN</name>
<comment type="function">
    <text evidence="1 5">Plays a role in the maintenance of lens transparency, and may also play a role in muscle cell strength (By similarity). Involved in hippocampal neurite branching and neuromuscular junction formation, as a result plays a role in spatial memory functioning (By similarity). Activates transcription of APP (PubMed:14527950).</text>
</comment>
<comment type="subunit">
    <text evidence="5 7">Interacts (via C-terminus) with APP (via C-terminus) (PubMed:14527950, PubMed:8855266). Interacts with APLP2 (via cytoplasmic domain) (PubMed:8855266).</text>
</comment>
<comment type="interaction">
    <interactant intactId="EBI-79277">
        <id>Q92870</id>
    </interactant>
    <interactant intactId="EBI-79306">
        <id>Q06481</id>
        <label>APLP2</label>
    </interactant>
    <organismsDiffer>false</organismsDiffer>
    <experiments>3</experiments>
</comment>
<comment type="interaction">
    <interactant intactId="EBI-79277">
        <id>Q92870</id>
    </interactant>
    <interactant intactId="EBI-77613">
        <id>P05067</id>
        <label>APP</label>
    </interactant>
    <organismsDiffer>false</organismsDiffer>
    <experiments>6</experiments>
</comment>
<comment type="interaction">
    <interactant intactId="EBI-79277">
        <id>Q92870</id>
    </interactant>
    <interactant intactId="EBI-297353">
        <id>P00533</id>
        <label>EGFR</label>
    </interactant>
    <organismsDiffer>false</organismsDiffer>
    <experiments>7</experiments>
</comment>
<comment type="interaction">
    <interactant intactId="EBI-21535880">
        <id>Q92870-2</id>
    </interactant>
    <interactant intactId="EBI-22011868">
        <id>Q6PCB6</id>
        <label>ABHD17C</label>
    </interactant>
    <organismsDiffer>false</organismsDiffer>
    <experiments>3</experiments>
</comment>
<comment type="interaction">
    <interactant intactId="EBI-21535880">
        <id>Q92870-2</id>
    </interactant>
    <interactant intactId="EBI-748855">
        <id>O43488</id>
        <label>AKR7A2</label>
    </interactant>
    <organismsDiffer>false</organismsDiffer>
    <experiments>3</experiments>
</comment>
<comment type="interaction">
    <interactant intactId="EBI-21535880">
        <id>Q92870-2</id>
    </interactant>
    <interactant intactId="EBI-11529439">
        <id>P63010-2</id>
        <label>AP2B1</label>
    </interactant>
    <organismsDiffer>false</organismsDiffer>
    <experiments>3</experiments>
</comment>
<comment type="interaction">
    <interactant intactId="EBI-21535880">
        <id>Q92870-2</id>
    </interactant>
    <interactant intactId="EBI-77613">
        <id>P05067</id>
        <label>APP</label>
    </interactant>
    <organismsDiffer>false</organismsDiffer>
    <experiments>3</experiments>
</comment>
<comment type="interaction">
    <interactant intactId="EBI-21535880">
        <id>Q92870-2</id>
    </interactant>
    <interactant intactId="EBI-10694449">
        <id>Q8N6T3-3</id>
        <label>ARFGAP1</label>
    </interactant>
    <organismsDiffer>false</organismsDiffer>
    <experiments>3</experiments>
</comment>
<comment type="interaction">
    <interactant intactId="EBI-21535880">
        <id>Q92870-2</id>
    </interactant>
    <interactant intactId="EBI-10186132">
        <id>Q0P5N6</id>
        <label>ARL16</label>
    </interactant>
    <organismsDiffer>false</organismsDiffer>
    <experiments>3</experiments>
</comment>
<comment type="interaction">
    <interactant intactId="EBI-21535880">
        <id>Q92870-2</id>
    </interactant>
    <interactant intactId="EBI-10254793">
        <id>Q6XD76</id>
        <label>ASCL4</label>
    </interactant>
    <organismsDiffer>false</organismsDiffer>
    <experiments>3</experiments>
</comment>
<comment type="interaction">
    <interactant intactId="EBI-21535880">
        <id>Q92870-2</id>
    </interactant>
    <interactant intactId="EBI-9089489">
        <id>Q96FT7-4</id>
        <label>ASIC4</label>
    </interactant>
    <organismsDiffer>false</organismsDiffer>
    <experiments>3</experiments>
</comment>
<comment type="interaction">
    <interactant intactId="EBI-21535880">
        <id>Q92870-2</id>
    </interactant>
    <interactant intactId="EBI-712767">
        <id>P18847</id>
        <label>ATF3</label>
    </interactant>
    <organismsDiffer>false</organismsDiffer>
    <experiments>3</experiments>
</comment>
<comment type="interaction">
    <interactant intactId="EBI-21535880">
        <id>Q92870-2</id>
    </interactant>
    <interactant intactId="EBI-752084">
        <id>Q9BUW7</id>
        <label>BBLN</label>
    </interactant>
    <organismsDiffer>false</organismsDiffer>
    <experiments>3</experiments>
</comment>
<comment type="interaction">
    <interactant intactId="EBI-21535880">
        <id>Q92870-2</id>
    </interactant>
    <interactant intactId="EBI-518823">
        <id>O15392</id>
        <label>BIRC5</label>
    </interactant>
    <organismsDiffer>false</organismsDiffer>
    <experiments>3</experiments>
</comment>
<comment type="interaction">
    <interactant intactId="EBI-21535880">
        <id>Q92870-2</id>
    </interactant>
    <interactant intactId="EBI-3919268">
        <id>Q96LC9</id>
        <label>BMF</label>
    </interactant>
    <organismsDiffer>false</organismsDiffer>
    <experiments>3</experiments>
</comment>
<comment type="interaction">
    <interactant intactId="EBI-21535880">
        <id>Q92870-2</id>
    </interactant>
    <interactant intactId="EBI-1383687">
        <id>Q9UQM7</id>
        <label>CAMK2A</label>
    </interactant>
    <organismsDiffer>false</organismsDiffer>
    <experiments>3</experiments>
</comment>
<comment type="interaction">
    <interactant intactId="EBI-21535880">
        <id>Q92870-2</id>
    </interactant>
    <interactant intactId="EBI-395261">
        <id>P24863</id>
        <label>CCNC</label>
    </interactant>
    <organismsDiffer>false</organismsDiffer>
    <experiments>3</experiments>
</comment>
<comment type="interaction">
    <interactant intactId="EBI-21535880">
        <id>Q92870-2</id>
    </interactant>
    <interactant intactId="EBI-3913685">
        <id>O95674</id>
        <label>CDS2</label>
    </interactant>
    <organismsDiffer>false</organismsDiffer>
    <experiments>3</experiments>
</comment>
<comment type="interaction">
    <interactant intactId="EBI-21535880">
        <id>Q92870-2</id>
    </interactant>
    <interactant intactId="EBI-77321">
        <id>Q9UER7</id>
        <label>DAXX</label>
    </interactant>
    <organismsDiffer>false</organismsDiffer>
    <experiments>3</experiments>
</comment>
<comment type="interaction">
    <interactant intactId="EBI-21535880">
        <id>Q92870-2</id>
    </interactant>
    <interactant intactId="EBI-3908248">
        <id>O60479</id>
        <label>DLX3</label>
    </interactant>
    <organismsDiffer>false</organismsDiffer>
    <experiments>3</experiments>
</comment>
<comment type="interaction">
    <interactant intactId="EBI-21535880">
        <id>Q92870-2</id>
    </interactant>
    <interactant intactId="EBI-23669343">
        <id>Q92782-2</id>
        <label>DPF1</label>
    </interactant>
    <organismsDiffer>false</organismsDiffer>
    <experiments>3</experiments>
</comment>
<comment type="interaction">
    <interactant intactId="EBI-21535880">
        <id>Q92870-2</id>
    </interactant>
    <interactant intactId="EBI-7779316">
        <id>A0AVK6</id>
        <label>E2F8</label>
    </interactant>
    <organismsDiffer>false</organismsDiffer>
    <experiments>3</experiments>
</comment>
<comment type="interaction">
    <interactant intactId="EBI-21535880">
        <id>Q92870-2</id>
    </interactant>
    <interactant intactId="EBI-395274">
        <id>O00472</id>
        <label>ELL2</label>
    </interactant>
    <organismsDiffer>false</organismsDiffer>
    <experiments>3</experiments>
</comment>
<comment type="interaction">
    <interactant intactId="EBI-21535880">
        <id>Q92870-2</id>
    </interactant>
    <interactant intactId="EBI-9246952">
        <id>Q8TC29</id>
        <label>ENKUR</label>
    </interactant>
    <organismsDiffer>false</organismsDiffer>
    <experiments>3</experiments>
</comment>
<comment type="interaction">
    <interactant intactId="EBI-21535880">
        <id>Q92870-2</id>
    </interactant>
    <interactant intactId="EBI-21567429">
        <id>Q6NXG1-3</id>
        <label>ESRP1</label>
    </interactant>
    <organismsDiffer>false</organismsDiffer>
    <experiments>3</experiments>
</comment>
<comment type="interaction">
    <interactant intactId="EBI-21535880">
        <id>Q92870-2</id>
    </interactant>
    <interactant intactId="EBI-9089567">
        <id>Q99504</id>
        <label>EYA3</label>
    </interactant>
    <organismsDiffer>false</organismsDiffer>
    <experiments>3</experiments>
</comment>
<comment type="interaction">
    <interactant intactId="EBI-21535880">
        <id>Q92870-2</id>
    </interactant>
    <interactant intactId="EBI-19946114">
        <id>Q5XKR9-2</id>
        <label>FAM104B</label>
    </interactant>
    <organismsDiffer>false</organismsDiffer>
    <experiments>3</experiments>
</comment>
<comment type="interaction">
    <interactant intactId="EBI-21535880">
        <id>Q92870-2</id>
    </interactant>
    <interactant intactId="EBI-81610">
        <id>O15287</id>
        <label>FANCG</label>
    </interactant>
    <organismsDiffer>false</organismsDiffer>
    <experiments>3</experiments>
</comment>
<comment type="interaction">
    <interactant intactId="EBI-21535880">
        <id>Q92870-2</id>
    </interactant>
    <interactant intactId="EBI-10253815">
        <id>Q6PIV2</id>
        <label>FOXR1</label>
    </interactant>
    <organismsDiffer>false</organismsDiffer>
    <experiments>3</experiments>
</comment>
<comment type="interaction">
    <interactant intactId="EBI-21535880">
        <id>Q92870-2</id>
    </interactant>
    <interactant intactId="EBI-515315">
        <id>P06241</id>
        <label>FYN</label>
    </interactant>
    <organismsDiffer>false</organismsDiffer>
    <experiments>3</experiments>
</comment>
<comment type="interaction">
    <interactant intactId="EBI-21535880">
        <id>Q92870-2</id>
    </interactant>
    <interactant intactId="EBI-301762">
        <id>Q969S8</id>
        <label>HDAC10</label>
    </interactant>
    <organismsDiffer>false</organismsDiffer>
    <experiments>3</experiments>
</comment>
<comment type="interaction">
    <interactant intactId="EBI-21535880">
        <id>Q92870-2</id>
    </interactant>
    <interactant intactId="EBI-2965780">
        <id>P52790</id>
        <label>HK3</label>
    </interactant>
    <organismsDiffer>false</organismsDiffer>
    <experiments>3</experiments>
</comment>
<comment type="interaction">
    <interactant intactId="EBI-21535880">
        <id>Q92870-2</id>
    </interactant>
    <interactant intactId="EBI-8470697">
        <id>P20719</id>
        <label>HOXA5</label>
    </interactant>
    <organismsDiffer>false</organismsDiffer>
    <experiments>3</experiments>
</comment>
<comment type="interaction">
    <interactant intactId="EBI-21535880">
        <id>Q92870-2</id>
    </interactant>
    <interactant intactId="EBI-21911304">
        <id>Q6DN90-2</id>
        <label>IQSEC1</label>
    </interactant>
    <organismsDiffer>false</organismsDiffer>
    <experiments>3</experiments>
</comment>
<comment type="interaction">
    <interactant intactId="EBI-21535880">
        <id>Q92870-2</id>
    </interactant>
    <interactant intactId="EBI-12382297">
        <id>Q96SI1-2</id>
        <label>KCTD15</label>
    </interactant>
    <organismsDiffer>false</organismsDiffer>
    <experiments>3</experiments>
</comment>
<comment type="interaction">
    <interactant intactId="EBI-21535880">
        <id>Q92870-2</id>
    </interactant>
    <interactant intactId="EBI-743960">
        <id>Q8N5Z5</id>
        <label>KCTD17</label>
    </interactant>
    <organismsDiffer>false</organismsDiffer>
    <experiments>3</experiments>
</comment>
<comment type="interaction">
    <interactant intactId="EBI-21535880">
        <id>Q92870-2</id>
    </interactant>
    <interactant intactId="EBI-1643885">
        <id>Q6P597</id>
        <label>KLC3</label>
    </interactant>
    <organismsDiffer>false</organismsDiffer>
    <experiments>3</experiments>
</comment>
<comment type="interaction">
    <interactant intactId="EBI-21535880">
        <id>Q92870-2</id>
    </interactant>
    <interactant intactId="EBI-12811111">
        <id>Q8IUB9</id>
        <label>KRTAP19-1</label>
    </interactant>
    <organismsDiffer>false</organismsDiffer>
    <experiments>3</experiments>
</comment>
<comment type="interaction">
    <interactant intactId="EBI-21535880">
        <id>Q92870-2</id>
    </interactant>
    <interactant intactId="EBI-10261141">
        <id>Q8IUC2</id>
        <label>KRTAP8-1</label>
    </interactant>
    <organismsDiffer>false</organismsDiffer>
    <experiments>3</experiments>
</comment>
<comment type="interaction">
    <interactant intactId="EBI-21535880">
        <id>Q92870-2</id>
    </interactant>
    <interactant intactId="EBI-10264791">
        <id>Q8N0U6</id>
        <label>LINC00518</label>
    </interactant>
    <organismsDiffer>false</organismsDiffer>
    <experiments>3</experiments>
</comment>
<comment type="interaction">
    <interactant intactId="EBI-21535880">
        <id>Q92870-2</id>
    </interactant>
    <interactant intactId="EBI-25831954">
        <id>Q6ZP95</id>
        <label>LOC642947</label>
    </interactant>
    <organismsDiffer>false</organismsDiffer>
    <experiments>3</experiments>
</comment>
<comment type="interaction">
    <interactant intactId="EBI-21535880">
        <id>Q92870-2</id>
    </interactant>
    <interactant intactId="EBI-23820194">
        <id>Q03112-9</id>
        <label>MECOM</label>
    </interactant>
    <organismsDiffer>false</organismsDiffer>
    <experiments>3</experiments>
</comment>
<comment type="interaction">
    <interactant intactId="EBI-21535880">
        <id>Q92870-2</id>
    </interactant>
    <interactant intactId="EBI-2864512">
        <id>P50221</id>
        <label>MEOX1</label>
    </interactant>
    <organismsDiffer>false</organismsDiffer>
    <experiments>3</experiments>
</comment>
<comment type="interaction">
    <interactant intactId="EBI-21535880">
        <id>Q92870-2</id>
    </interactant>
    <interactant intactId="EBI-4397720">
        <id>Q8TDB4</id>
        <label>MGARP</label>
    </interactant>
    <organismsDiffer>false</organismsDiffer>
    <experiments>3</experiments>
</comment>
<comment type="interaction">
    <interactant intactId="EBI-21535880">
        <id>Q92870-2</id>
    </interactant>
    <interactant intactId="EBI-21250407">
        <id>A4FUJ8</id>
        <label>MKL1</label>
    </interactant>
    <organismsDiffer>false</organismsDiffer>
    <experiments>3</experiments>
</comment>
<comment type="interaction">
    <interactant intactId="EBI-21535880">
        <id>Q92870-2</id>
    </interactant>
    <interactant intactId="EBI-2340269">
        <id>Q13064</id>
        <label>MKRN3</label>
    </interactant>
    <organismsDiffer>false</organismsDiffer>
    <experiments>3</experiments>
</comment>
<comment type="interaction">
    <interactant intactId="EBI-21535880">
        <id>Q92870-2</id>
    </interactant>
    <interactant intactId="EBI-995714">
        <id>Q9Y605</id>
        <label>MRFAP1</label>
    </interactant>
    <organismsDiffer>false</organismsDiffer>
    <experiments>3</experiments>
</comment>
<comment type="interaction">
    <interactant intactId="EBI-21535880">
        <id>Q92870-2</id>
    </interactant>
    <interactant intactId="EBI-9092052">
        <id>Q9Y3D2</id>
        <label>MSRB2</label>
    </interactant>
    <organismsDiffer>false</organismsDiffer>
    <experiments>3</experiments>
</comment>
<comment type="interaction">
    <interactant intactId="EBI-21535880">
        <id>Q92870-2</id>
    </interactant>
    <interactant intactId="EBI-6952711">
        <id>Q8WY64</id>
        <label>MYLIP</label>
    </interactant>
    <organismsDiffer>false</organismsDiffer>
    <experiments>3</experiments>
</comment>
<comment type="interaction">
    <interactant intactId="EBI-21535880">
        <id>Q92870-2</id>
    </interactant>
    <interactant intactId="EBI-18040878">
        <id>Q69YI7-2</id>
        <label>NAIF1</label>
    </interactant>
    <organismsDiffer>false</organismsDiffer>
    <experiments>3</experiments>
</comment>
<comment type="interaction">
    <interactant intactId="EBI-21535880">
        <id>Q92870-2</id>
    </interactant>
    <interactant intactId="EBI-389845">
        <id>Q9Y2A7</id>
        <label>NCKAP1</label>
    </interactant>
    <organismsDiffer>false</organismsDiffer>
    <experiments>3</experiments>
</comment>
<comment type="interaction">
    <interactant intactId="EBI-21535880">
        <id>Q92870-2</id>
    </interactant>
    <interactant intactId="EBI-2802743">
        <id>Q6PHZ7</id>
        <label>NR2C2</label>
    </interactant>
    <organismsDiffer>false</organismsDiffer>
    <experiments>3</experiments>
</comment>
<comment type="interaction">
    <interactant intactId="EBI-21535880">
        <id>Q92870-2</id>
    </interactant>
    <interactant intactId="EBI-11742836">
        <id>Q16656-4</id>
        <label>NRF1</label>
    </interactant>
    <organismsDiffer>false</organismsDiffer>
    <experiments>3</experiments>
</comment>
<comment type="interaction">
    <interactant intactId="EBI-21535880">
        <id>Q92870-2</id>
    </interactant>
    <interactant intactId="EBI-10698339">
        <id>Q9NPJ8-3</id>
        <label>NXT2</label>
    </interactant>
    <organismsDiffer>false</organismsDiffer>
    <experiments>3</experiments>
</comment>
<comment type="interaction">
    <interactant intactId="EBI-21535880">
        <id>Q92870-2</id>
    </interactant>
    <interactant intactId="EBI-536879">
        <id>O43482</id>
        <label>OIP5</label>
    </interactant>
    <organismsDiffer>false</organismsDiffer>
    <experiments>3</experiments>
</comment>
<comment type="interaction">
    <interactant intactId="EBI-21535880">
        <id>Q92870-2</id>
    </interactant>
    <interactant intactId="EBI-9091423">
        <id>Q96CV9-2</id>
        <label>OPTN</label>
    </interactant>
    <organismsDiffer>false</organismsDiffer>
    <experiments>3</experiments>
</comment>
<comment type="interaction">
    <interactant intactId="EBI-21535880">
        <id>Q92870-2</id>
    </interactant>
    <interactant intactId="EBI-2555014">
        <id>Q6VY07</id>
        <label>PACS1</label>
    </interactant>
    <organismsDiffer>false</organismsDiffer>
    <experiments>3</experiments>
</comment>
<comment type="interaction">
    <interactant intactId="EBI-21535880">
        <id>Q92870-2</id>
    </interactant>
    <interactant intactId="EBI-12386584">
        <id>P22061-2</id>
        <label>PCMT1</label>
    </interactant>
    <organismsDiffer>false</organismsDiffer>
    <experiments>3</experiments>
</comment>
<comment type="interaction">
    <interactant intactId="EBI-21535880">
        <id>Q92870-2</id>
    </interactant>
    <interactant intactId="EBI-2557276">
        <id>O15534</id>
        <label>PER1</label>
    </interactant>
    <organismsDiffer>false</organismsDiffer>
    <experiments>3</experiments>
</comment>
<comment type="interaction">
    <interactant intactId="EBI-21535880">
        <id>Q92870-2</id>
    </interactant>
    <interactant intactId="EBI-629434">
        <id>O75925</id>
        <label>PIAS1</label>
    </interactant>
    <organismsDiffer>false</organismsDiffer>
    <experiments>3</experiments>
</comment>
<comment type="interaction">
    <interactant intactId="EBI-21535880">
        <id>Q92870-2</id>
    </interactant>
    <interactant intactId="EBI-748265">
        <id>P78337</id>
        <label>PITX1</label>
    </interactant>
    <organismsDiffer>false</organismsDiffer>
    <experiments>3</experiments>
</comment>
<comment type="interaction">
    <interactant intactId="EBI-21535880">
        <id>Q92870-2</id>
    </interactant>
    <interactant intactId="EBI-12891828">
        <id>Q6ZR37</id>
        <label>PLEKHG7</label>
    </interactant>
    <organismsDiffer>false</organismsDiffer>
    <experiments>3</experiments>
</comment>
<comment type="interaction">
    <interactant intactId="EBI-21535880">
        <id>Q92870-2</id>
    </interactant>
    <interactant intactId="EBI-710067">
        <id>Q9H1D9</id>
        <label>POLR3F</label>
    </interactant>
    <organismsDiffer>false</organismsDiffer>
    <experiments>3</experiments>
</comment>
<comment type="interaction">
    <interactant intactId="EBI-21535880">
        <id>Q92870-2</id>
    </interactant>
    <interactant intactId="EBI-710402">
        <id>Q96I34</id>
        <label>PPP1R16A</label>
    </interactant>
    <organismsDiffer>false</organismsDiffer>
    <experiments>3</experiments>
</comment>
<comment type="interaction">
    <interactant intactId="EBI-21535880">
        <id>Q92870-2</id>
    </interactant>
    <interactant intactId="EBI-476586">
        <id>P17612</id>
        <label>PRKACA</label>
    </interactant>
    <organismsDiffer>false</organismsDiffer>
    <experiments>3</experiments>
</comment>
<comment type="interaction">
    <interactant intactId="EBI-21535880">
        <id>Q92870-2</id>
    </interactant>
    <interactant intactId="EBI-743880">
        <id>Q8WUY3</id>
        <label>PRUNE2</label>
    </interactant>
    <organismsDiffer>false</organismsDiffer>
    <experiments>3</experiments>
</comment>
<comment type="interaction">
    <interactant intactId="EBI-21535880">
        <id>Q92870-2</id>
    </interactant>
    <interactant intactId="EBI-2856714">
        <id>Q9H0N0</id>
        <label>RAB6C</label>
    </interactant>
    <organismsDiffer>false</organismsDiffer>
    <experiments>3</experiments>
</comment>
<comment type="interaction">
    <interactant intactId="EBI-21535880">
        <id>Q92870-2</id>
    </interactant>
    <interactant intactId="EBI-743938">
        <id>Q96D59</id>
        <label>RNF183</label>
    </interactant>
    <organismsDiffer>false</organismsDiffer>
    <experiments>3</experiments>
</comment>
<comment type="interaction">
    <interactant intactId="EBI-21535880">
        <id>Q92870-2</id>
    </interactant>
    <interactant intactId="EBI-632609">
        <id>O75446</id>
        <label>SAP30</label>
    </interactant>
    <organismsDiffer>false</organismsDiffer>
    <experiments>3</experiments>
</comment>
<comment type="interaction">
    <interactant intactId="EBI-21535880">
        <id>Q92870-2</id>
    </interactant>
    <interactant intactId="EBI-1570153">
        <id>Q6UVJ0</id>
        <label>SASS6</label>
    </interactant>
    <organismsDiffer>false</organismsDiffer>
    <experiments>3</experiments>
</comment>
<comment type="interaction">
    <interactant intactId="EBI-21535880">
        <id>Q92870-2</id>
    </interactant>
    <interactant intactId="EBI-2560428">
        <id>Q8IYI0</id>
        <label>SHLD1</label>
    </interactant>
    <organismsDiffer>false</organismsDiffer>
    <experiments>3</experiments>
</comment>
<comment type="interaction">
    <interactant intactId="EBI-21535880">
        <id>Q92870-2</id>
    </interactant>
    <interactant intactId="EBI-25831241">
        <id>Q9NSD5-3</id>
        <label>SLC6A13</label>
    </interactant>
    <organismsDiffer>false</organismsDiffer>
    <experiments>3</experiments>
</comment>
<comment type="interaction">
    <interactant intactId="EBI-21535880">
        <id>Q92870-2</id>
    </interactant>
    <interactant intactId="EBI-7239117">
        <id>Q9BT81</id>
        <label>SOX7</label>
    </interactant>
    <organismsDiffer>false</organismsDiffer>
    <experiments>3</experiments>
</comment>
<comment type="interaction">
    <interactant intactId="EBI-21535880">
        <id>Q92870-2</id>
    </interactant>
    <interactant intactId="EBI-10696971">
        <id>Q7Z6I5</id>
        <label>SPATA12</label>
    </interactant>
    <organismsDiffer>false</organismsDiffer>
    <experiments>3</experiments>
</comment>
<comment type="interaction">
    <interactant intactId="EBI-21535880">
        <id>Q92870-2</id>
    </interactant>
    <interactant intactId="EBI-2510414">
        <id>Q8IUW3</id>
        <label>SPATA2L</label>
    </interactant>
    <organismsDiffer>false</organismsDiffer>
    <experiments>3</experiments>
</comment>
<comment type="interaction">
    <interactant intactId="EBI-21535880">
        <id>Q92870-2</id>
    </interactant>
    <interactant intactId="EBI-10174456">
        <id>Q8N865</id>
        <label>SPMIP4</label>
    </interactant>
    <organismsDiffer>false</organismsDiffer>
    <experiments>3</experiments>
</comment>
<comment type="interaction">
    <interactant intactId="EBI-21535880">
        <id>Q92870-2</id>
    </interactant>
    <interactant intactId="EBI-7082156">
        <id>Q7Z698</id>
        <label>SPRED2</label>
    </interactant>
    <organismsDiffer>false</organismsDiffer>
    <experiments>3</experiments>
</comment>
<comment type="interaction">
    <interactant intactId="EBI-21535880">
        <id>Q92870-2</id>
    </interactant>
    <interactant intactId="EBI-373258">
        <id>O75886</id>
        <label>STAM2</label>
    </interactant>
    <organismsDiffer>false</organismsDiffer>
    <experiments>3</experiments>
</comment>
<comment type="interaction">
    <interactant intactId="EBI-21535880">
        <id>Q92870-2</id>
    </interactant>
    <interactant intactId="EBI-25831443">
        <id>Q9BR01-2</id>
        <label>SULT4A1</label>
    </interactant>
    <organismsDiffer>false</organismsDiffer>
    <experiments>3</experiments>
</comment>
<comment type="interaction">
    <interactant intactId="EBI-21535880">
        <id>Q92870-2</id>
    </interactant>
    <interactant intactId="EBI-723091">
        <id>Q8NBJ7</id>
        <label>SUMF2</label>
    </interactant>
    <organismsDiffer>false</organismsDiffer>
    <experiments>3</experiments>
</comment>
<comment type="interaction">
    <interactant intactId="EBI-21535880">
        <id>Q92870-2</id>
    </interactant>
    <interactant intactId="EBI-348333">
        <id>Q13569</id>
        <label>TDG</label>
    </interactant>
    <organismsDiffer>false</organismsDiffer>
    <experiments>3</experiments>
</comment>
<comment type="interaction">
    <interactant intactId="EBI-21535880">
        <id>Q92870-2</id>
    </interactant>
    <interactant intactId="EBI-9091586">
        <id>Q96MW7</id>
        <label>TIGD1</label>
    </interactant>
    <organismsDiffer>false</organismsDiffer>
    <experiments>3</experiments>
</comment>
<comment type="interaction">
    <interactant intactId="EBI-21535880">
        <id>Q92870-2</id>
    </interactant>
    <interactant intactId="EBI-10242677">
        <id>Q53NU3</id>
        <label>tmp_locus_54</label>
    </interactant>
    <organismsDiffer>false</organismsDiffer>
    <experiments>3</experiments>
</comment>
<comment type="interaction">
    <interactant intactId="EBI-21535880">
        <id>Q92870-2</id>
    </interactant>
    <interactant intactId="EBI-25831574">
        <id>Q71RG4-4</id>
        <label>TMUB2</label>
    </interactant>
    <organismsDiffer>false</organismsDiffer>
    <experiments>3</experiments>
</comment>
<comment type="interaction">
    <interactant intactId="EBI-21535880">
        <id>Q92870-2</id>
    </interactant>
    <interactant intactId="EBI-1050671">
        <id>Q13404</id>
        <label>UBE2V1</label>
    </interactant>
    <organismsDiffer>false</organismsDiffer>
    <experiments>3</experiments>
</comment>
<comment type="interaction">
    <interactant intactId="EBI-21535880">
        <id>Q92870-2</id>
    </interactant>
    <interactant intactId="EBI-354022">
        <id>P45880</id>
        <label>VDAC2</label>
    </interactant>
    <organismsDiffer>false</organismsDiffer>
    <experiments>3</experiments>
</comment>
<comment type="interaction">
    <interactant intactId="EBI-21535880">
        <id>Q92870-2</id>
    </interactant>
    <interactant intactId="EBI-6427899">
        <id>P58304</id>
        <label>VSX2</label>
    </interactant>
    <organismsDiffer>false</organismsDiffer>
    <experiments>3</experiments>
</comment>
<comment type="interaction">
    <interactant intactId="EBI-21535880">
        <id>Q92870-2</id>
    </interactant>
    <interactant intactId="EBI-372156">
        <id>Q13105</id>
        <label>ZBTB17</label>
    </interactant>
    <organismsDiffer>false</organismsDiffer>
    <experiments>3</experiments>
</comment>
<comment type="interaction">
    <interactant intactId="EBI-21535880">
        <id>Q92870-2</id>
    </interactant>
    <interactant intactId="EBI-6448240">
        <id>Q96K21</id>
        <label>ZFYVE19</label>
    </interactant>
    <organismsDiffer>false</organismsDiffer>
    <experiments>3</experiments>
</comment>
<comment type="interaction">
    <interactant intactId="EBI-21535880">
        <id>Q92870-2</id>
    </interactant>
    <interactant intactId="EBI-25830993">
        <id>Q96EF9</id>
        <label>ZHX1-C8orf76</label>
    </interactant>
    <organismsDiffer>false</organismsDiffer>
    <experiments>3</experiments>
</comment>
<comment type="interaction">
    <interactant intactId="EBI-21535880">
        <id>Q92870-2</id>
    </interactant>
    <interactant intactId="EBI-2682299">
        <id>Q96NC0</id>
        <label>ZMAT2</label>
    </interactant>
    <organismsDiffer>false</organismsDiffer>
    <experiments>3</experiments>
</comment>
<comment type="interaction">
    <interactant intactId="EBI-21535880">
        <id>Q92870-2</id>
    </interactant>
    <interactant intactId="EBI-2813661">
        <id>Q8N895</id>
        <label>ZNF366</label>
    </interactant>
    <organismsDiffer>false</organismsDiffer>
    <experiments>3</experiments>
</comment>
<comment type="interaction">
    <interactant intactId="EBI-21535880">
        <id>Q92870-2</id>
    </interactant>
    <interactant intactId="EBI-25831733">
        <id>Q96MN9-2</id>
        <label>ZNF488</label>
    </interactant>
    <organismsDiffer>false</organismsDiffer>
    <experiments>3</experiments>
</comment>
<comment type="interaction">
    <interactant intactId="EBI-21535880">
        <id>Q92870-2</id>
    </interactant>
    <interactant intactId="EBI-723434">
        <id>Q5JTY5</id>
        <label>ZNG1C</label>
    </interactant>
    <organismsDiffer>false</organismsDiffer>
    <experiments>3</experiments>
</comment>
<comment type="interaction">
    <interactant intactId="EBI-21535880">
        <id>Q92870-2</id>
    </interactant>
    <interactant intactId="EBI-347522">
        <id>O43257</id>
        <label>ZNHIT1</label>
    </interactant>
    <organismsDiffer>false</organismsDiffer>
    <experiments>3</experiments>
</comment>
<comment type="interaction">
    <interactant intactId="EBI-21535880">
        <id>Q92870-2</id>
    </interactant>
    <interactant intactId="EBI-25831303">
        <id>A8K878</id>
    </interactant>
    <organismsDiffer>false</organismsDiffer>
    <experiments>3</experiments>
</comment>
<comment type="interaction">
    <interactant intactId="EBI-21535880">
        <id>Q92870-2</id>
    </interactant>
    <interactant intactId="EBI-25831617">
        <id>B7Z3E8</id>
    </interactant>
    <organismsDiffer>false</organismsDiffer>
    <experiments>3</experiments>
</comment>
<comment type="interaction">
    <interactant intactId="EBI-21535880">
        <id>Q92870-2</id>
    </interactant>
    <interactant intactId="EBI-25831943">
        <id>Q7L8T7</id>
    </interactant>
    <organismsDiffer>false</organismsDiffer>
    <experiments>3</experiments>
</comment>
<comment type="interaction">
    <interactant intactId="EBI-21535880">
        <id>Q92870-2</id>
    </interactant>
    <interactant intactId="EBI-25831475">
        <id>Q7Z637</id>
    </interactant>
    <organismsDiffer>false</organismsDiffer>
    <experiments>3</experiments>
</comment>
<comment type="interaction">
    <interactant intactId="EBI-21535880">
        <id>Q92870-2</id>
    </interactant>
    <interactant intactId="EBI-10307430">
        <id>Q9H669</id>
    </interactant>
    <organismsDiffer>false</organismsDiffer>
    <experiments>3</experiments>
</comment>
<comment type="subcellular location">
    <subcellularLocation>
        <location evidence="5">Endoplasmic reticulum</location>
    </subcellularLocation>
    <subcellularLocation>
        <location evidence="5">Golgi apparatus</location>
    </subcellularLocation>
    <subcellularLocation>
        <location evidence="5">Early endosome</location>
    </subcellularLocation>
</comment>
<comment type="alternative products">
    <event type="alternative splicing"/>
    <isoform>
        <id>Q92870-1</id>
        <name>1</name>
        <sequence type="displayed"/>
    </isoform>
    <isoform>
        <id>Q92870-2</id>
        <name>2</name>
        <sequence type="described" ref="VSP_040354 VSP_040355"/>
    </isoform>
    <isoform>
        <id>Q92870-3</id>
        <name>3</name>
        <sequence type="described" ref="VSP_044232"/>
    </isoform>
    <isoform>
        <id>Q92870-4</id>
        <name>4</name>
        <sequence type="described" ref="VSP_045042"/>
    </isoform>
</comment>
<comment type="tissue specificity">
    <text evidence="7">Widely expressed.</text>
</comment>
<comment type="sequence caution" evidence="13">
    <conflict type="miscellaneous discrepancy">
        <sequence resource="EMBL-CDS" id="AAC50805"/>
    </conflict>
    <text>Contaminating sequence. Sequence of unknown origin in the N-terminal part.</text>
</comment>
<sequence length="758" mass="83374">MSEVLPADSGVDTLAVFMASSGTTDVTNRNSPATPPNTLNLRSSHNELLNAEIKHTETKNSTPPKCRKKYALTNIQAAMGLSDPAAQPLLGNGSANIKLVKNGENQLRKAAEQGQQDPNKNLSPTAVINITSEKLEGKEPHPQDSSSCEILPSQPRRTKSFLNYYADLETSARELEQNRGNHHGTAEEKSQPVQGQASTIIGNGDLLLQKPNRPQSSPEDGQVATVSSSPETKKDHPKTGAKTDCALHRIQNLAPSDEESSWTTLSQDSASPSSPDETDIWSDHSFQTDPDLPPGWKRVSDIAGTYYWHIPTGTTQWERPVSIPADLQGSRKGSLSSVTPSPTPENEKQPWSDFAVLNGGKINSDIWKDLHAATVNPDPSLKEFEGATLRYASLKLRNAPHPDDDDSCSINSDPEAKCFAVRSLGWVEMAEEDLAPGKSSVAVNNCIRQLSYCKNDIRDTVGIWGEGKDMYLILENDMLSLVDPMDRSVLHSQPIVSIRVWGVGRDNGRDFAYVARDKDTRILKCHVFRCDTPAKAIATSLHEICSKIMAERKNAKALACSSLQERANVNLDVPLQVDFPTPKTELVQKFHVQYLGMLPVDKPVGMDILNSAIENLMTSSNKEDWLSVNMNVADATVTVISEKNEEEVLVECRVRFLSFMGVGKDVHTFAFIMDTGNQRFECHVFWCEPNAGNVSEAVQAACMLRYQKCLVARPPSQKVRPPPPPADSVTRRVTTNVKRGVLSLIDTLKQKRPVTEMP</sequence>